<organismHost>
    <name type="scientific">Homo sapiens</name>
    <name type="common">Human</name>
    <dbReference type="NCBI Taxonomy" id="9606"/>
</organismHost>
<accession>P36320</accession>
<accession>Q9QJ31</accession>
<protein>
    <recommendedName>
        <fullName evidence="3">Envelope glycoprotein B</fullName>
        <shortName evidence="3">gB</shortName>
    </recommendedName>
</protein>
<gene>
    <name evidence="3" type="primary">gB</name>
    <name type="ORF">U39</name>
</gene>
<comment type="function">
    <text evidence="3">Envelope glycoprotein that forms spikes at the surface of virion envelope. Essential for the initial attachment to heparan sulfate moieties of the host cell surface proteoglycans. Involved in fusion of viral and cellular membranes leading to virus entry into the host cell. Following initial binding to its host receptors, membrane fusion is mediated by the fusion machinery composed at least of gB and the heterodimer gH/gL. May be involved in the fusion between the virion envelope and the outer nuclear membrane during virion egress.</text>
</comment>
<comment type="subunit">
    <text evidence="3">Homotrimer; disulfide-linked. Binds to heparan sulfate proteoglycans. Interacts with gH/gL heterodimer.</text>
</comment>
<comment type="subcellular location">
    <subcellularLocation>
        <location evidence="3">Virion membrane</location>
        <topology evidence="3">Single-pass type I membrane protein</topology>
    </subcellularLocation>
    <subcellularLocation>
        <location evidence="3">Host cell membrane</location>
        <topology evidence="3">Single-pass type I membrane protein</topology>
    </subcellularLocation>
    <subcellularLocation>
        <location evidence="3">Host endosome membrane</location>
        <topology evidence="3">Single-pass type I membrane protein</topology>
    </subcellularLocation>
    <subcellularLocation>
        <location evidence="3">Host Golgi apparatus membrane</location>
        <topology evidence="3">Single-pass type I membrane protein</topology>
    </subcellularLocation>
    <text evidence="3">During virion morphogenesis, this protein probably accumulates in the endosomes and trans-Golgi where secondary envelopment occurs. It is probably transported to the cell surface from where it is endocytosed and directed to the trans-Golgi network (TGN).</text>
</comment>
<comment type="PTM">
    <text evidence="1">A proteolytic cleavage by host furin generates two subunits that remain linked by disulfide bonds.</text>
</comment>
<comment type="similarity">
    <text evidence="3">Belongs to the herpesviridae glycoprotein B family.</text>
</comment>
<organism>
    <name type="scientific">Human herpesvirus 6B (strain Z29)</name>
    <name type="common">HHV-6 variant B</name>
    <name type="synonym">Human B lymphotropic virus</name>
    <dbReference type="NCBI Taxonomy" id="36351"/>
    <lineage>
        <taxon>Viruses</taxon>
        <taxon>Duplodnaviria</taxon>
        <taxon>Heunggongvirae</taxon>
        <taxon>Peploviricota</taxon>
        <taxon>Herviviricetes</taxon>
        <taxon>Herpesvirales</taxon>
        <taxon>Orthoherpesviridae</taxon>
        <taxon>Betaherpesvirinae</taxon>
        <taxon>Roseolovirus</taxon>
        <taxon>Roseolovirus humanbeta6b</taxon>
        <taxon>Human herpesvirus 6B</taxon>
    </lineage>
</organism>
<reference key="1">
    <citation type="journal article" date="1992" name="Virology">
        <title>Homology of the envelope glycoprotein B of human herpesvirus-6 and cytomegalovirus.</title>
        <authorList>
            <person name="Chou S."/>
            <person name="Marousek G.I."/>
        </authorList>
    </citation>
    <scope>NUCLEOTIDE SEQUENCE [GENOMIC DNA]</scope>
</reference>
<reference key="2">
    <citation type="journal article" date="1999" name="J. Virol.">
        <title>Human herpesvirus 6B genome sequence: coding content and comparison with human herpesvirus 6A.</title>
        <authorList>
            <person name="Dominguez G."/>
            <person name="Dambaugh T.R."/>
            <person name="Stamey F.R."/>
            <person name="Dewhurst S."/>
            <person name="Inoue N."/>
            <person name="Pellett P.E."/>
        </authorList>
    </citation>
    <scope>NUCLEOTIDE SEQUENCE [LARGE SCALE GENOMIC DNA]</scope>
</reference>
<feature type="signal peptide" evidence="3">
    <location>
        <begin position="1"/>
        <end position="19"/>
    </location>
</feature>
<feature type="chain" id="PRO_0000038187" description="Envelope glycoprotein B" evidence="3">
    <location>
        <begin position="20"/>
        <end position="830"/>
    </location>
</feature>
<feature type="topological domain" description="Virion surface" evidence="3">
    <location>
        <begin position="20"/>
        <end position="688"/>
    </location>
</feature>
<feature type="transmembrane region" description="Helical" evidence="3">
    <location>
        <begin position="689"/>
        <end position="709"/>
    </location>
</feature>
<feature type="topological domain" description="Intravirion" evidence="3">
    <location>
        <begin position="710"/>
        <end position="830"/>
    </location>
</feature>
<feature type="region of interest" description="Involved in fusion and/or binding to host membrane" evidence="3">
    <location>
        <begin position="98"/>
        <end position="104"/>
    </location>
</feature>
<feature type="region of interest" description="Involved in fusion and/or binding to host membrane" evidence="3">
    <location>
        <begin position="184"/>
        <end position="191"/>
    </location>
</feature>
<feature type="region of interest" description="Hydrophobic membrane proximal region" evidence="3">
    <location>
        <begin position="634"/>
        <end position="686"/>
    </location>
</feature>
<feature type="region of interest" description="Hydrophobic membrane proximal region">
    <location>
        <begin position="644"/>
        <end position="685"/>
    </location>
</feature>
<feature type="short sequence motif" description="Internalization motif" evidence="3">
    <location>
        <begin position="822"/>
        <end position="825"/>
    </location>
</feature>
<feature type="site" description="Cleavage; by host furin" evidence="2">
    <location>
        <begin position="399"/>
        <end position="400"/>
    </location>
</feature>
<feature type="glycosylation site" description="N-linked (GlcNAc...) asparagine; by host" evidence="3">
    <location>
        <position position="155"/>
    </location>
</feature>
<feature type="glycosylation site" description="N-linked (GlcNAc...) asparagine; by host" evidence="3">
    <location>
        <position position="247"/>
    </location>
</feature>
<feature type="glycosylation site" description="N-linked (GlcNAc...) asparagine; by host" evidence="3">
    <location>
        <position position="286"/>
    </location>
</feature>
<feature type="glycosylation site" description="N-linked (GlcNAc...) asparagine; by host" evidence="3">
    <location>
        <position position="329"/>
    </location>
</feature>
<feature type="glycosylation site" description="N-linked (GlcNAc...) asparagine; by host" evidence="3">
    <location>
        <position position="361"/>
    </location>
</feature>
<feature type="glycosylation site" description="N-linked (GlcNAc...) asparagine; by host" evidence="3">
    <location>
        <position position="486"/>
    </location>
</feature>
<feature type="disulfide bond" evidence="3">
    <location>
        <begin position="41"/>
        <end position="482"/>
    </location>
</feature>
<feature type="disulfide bond" evidence="3">
    <location>
        <begin position="58"/>
        <end position="438"/>
    </location>
</feature>
<feature type="disulfide bond" evidence="3">
    <location>
        <begin position="131"/>
        <end position="197"/>
    </location>
</feature>
<feature type="disulfide bond" evidence="3">
    <location>
        <begin position="290"/>
        <end position="337"/>
    </location>
</feature>
<feature type="disulfide bond" evidence="3">
    <location>
        <begin position="510"/>
        <end position="548"/>
    </location>
</feature>
<feature type="sequence conflict" description="In Ref. 1; AAA43846." evidence="4" ref="1">
    <original>P</original>
    <variation>Q</variation>
    <location>
        <position position="96"/>
    </location>
</feature>
<feature type="sequence conflict" description="In Ref. 1; AAA43846." evidence="4" ref="1">
    <original>A</original>
    <variation>D</variation>
    <location>
        <position position="357"/>
    </location>
</feature>
<evidence type="ECO:0000250" key="1"/>
<evidence type="ECO:0000255" key="2"/>
<evidence type="ECO:0000255" key="3">
    <source>
        <dbReference type="HAMAP-Rule" id="MF_04032"/>
    </source>
</evidence>
<evidence type="ECO:0000305" key="4"/>
<name>GB_HHV6Z</name>
<keyword id="KW-1015">Disulfide bond</keyword>
<keyword id="KW-0325">Glycoprotein</keyword>
<keyword id="KW-1032">Host cell membrane</keyword>
<keyword id="KW-1039">Host endosome</keyword>
<keyword id="KW-1040">Host Golgi apparatus</keyword>
<keyword id="KW-1043">Host membrane</keyword>
<keyword id="KW-0945">Host-virus interaction</keyword>
<keyword id="KW-0472">Membrane</keyword>
<keyword id="KW-1185">Reference proteome</keyword>
<keyword id="KW-0732">Signal</keyword>
<keyword id="KW-0812">Transmembrane</keyword>
<keyword id="KW-1133">Transmembrane helix</keyword>
<keyword id="KW-1161">Viral attachment to host cell</keyword>
<keyword id="KW-0261">Viral envelope protein</keyword>
<keyword id="KW-0946">Virion</keyword>
<keyword id="KW-1160">Virus entry into host cell</keyword>
<proteinExistence type="inferred from homology"/>
<dbReference type="EMBL" id="M97927">
    <property type="protein sequence ID" value="AAA43846.1"/>
    <property type="molecule type" value="Genomic_DNA"/>
</dbReference>
<dbReference type="EMBL" id="AF157706">
    <property type="protein sequence ID" value="AAD49653.1"/>
    <property type="molecule type" value="Genomic_DNA"/>
</dbReference>
<dbReference type="PIR" id="B44047">
    <property type="entry name" value="B44047"/>
</dbReference>
<dbReference type="RefSeq" id="NP_050220.1">
    <property type="nucleotide sequence ID" value="NC_000898.1"/>
</dbReference>
<dbReference type="SMR" id="P36320"/>
<dbReference type="GlyCosmos" id="P36320">
    <property type="glycosylation" value="6 sites, No reported glycans"/>
</dbReference>
<dbReference type="DNASU" id="1497041"/>
<dbReference type="GeneID" id="1497041"/>
<dbReference type="KEGG" id="vg:1497041"/>
<dbReference type="Proteomes" id="UP000006930">
    <property type="component" value="Segment"/>
</dbReference>
<dbReference type="GO" id="GO:0044175">
    <property type="term" value="C:host cell endosome membrane"/>
    <property type="evidence" value="ECO:0007669"/>
    <property type="project" value="UniProtKB-SubCell"/>
</dbReference>
<dbReference type="GO" id="GO:0044178">
    <property type="term" value="C:host cell Golgi membrane"/>
    <property type="evidence" value="ECO:0007669"/>
    <property type="project" value="UniProtKB-SubCell"/>
</dbReference>
<dbReference type="GO" id="GO:0020002">
    <property type="term" value="C:host cell plasma membrane"/>
    <property type="evidence" value="ECO:0007669"/>
    <property type="project" value="UniProtKB-SubCell"/>
</dbReference>
<dbReference type="GO" id="GO:0016020">
    <property type="term" value="C:membrane"/>
    <property type="evidence" value="ECO:0007669"/>
    <property type="project" value="UniProtKB-KW"/>
</dbReference>
<dbReference type="GO" id="GO:0019031">
    <property type="term" value="C:viral envelope"/>
    <property type="evidence" value="ECO:0007669"/>
    <property type="project" value="UniProtKB-KW"/>
</dbReference>
<dbReference type="GO" id="GO:0055036">
    <property type="term" value="C:virion membrane"/>
    <property type="evidence" value="ECO:0007669"/>
    <property type="project" value="UniProtKB-SubCell"/>
</dbReference>
<dbReference type="GO" id="GO:0046718">
    <property type="term" value="P:symbiont entry into host cell"/>
    <property type="evidence" value="ECO:0007669"/>
    <property type="project" value="UniProtKB-KW"/>
</dbReference>
<dbReference type="GO" id="GO:0019062">
    <property type="term" value="P:virion attachment to host cell"/>
    <property type="evidence" value="ECO:0007669"/>
    <property type="project" value="UniProtKB-KW"/>
</dbReference>
<dbReference type="Gene3D" id="1.20.5.1890">
    <property type="match status" value="1"/>
</dbReference>
<dbReference type="Gene3D" id="2.30.29.100">
    <property type="match status" value="1"/>
</dbReference>
<dbReference type="Gene3D" id="2.30.30.1230">
    <property type="match status" value="1"/>
</dbReference>
<dbReference type="Gene3D" id="6.10.250.3280">
    <property type="match status" value="1"/>
</dbReference>
<dbReference type="HAMAP" id="MF_04032">
    <property type="entry name" value="HSV_GB"/>
    <property type="match status" value="1"/>
</dbReference>
<dbReference type="InterPro" id="IPR035377">
    <property type="entry name" value="Glycoprot_B_PH1"/>
</dbReference>
<dbReference type="InterPro" id="IPR035381">
    <property type="entry name" value="Glycoprot_B_PH2"/>
</dbReference>
<dbReference type="InterPro" id="IPR038631">
    <property type="entry name" value="Glycoprot_B_PH2_sf"/>
</dbReference>
<dbReference type="InterPro" id="IPR055341">
    <property type="entry name" value="Glycoprotein_B_ecto_C"/>
</dbReference>
<dbReference type="InterPro" id="IPR000234">
    <property type="entry name" value="Herpes_Glycoprot_B"/>
</dbReference>
<dbReference type="Pfam" id="PF17416">
    <property type="entry name" value="Glycoprot_B_PH1"/>
    <property type="match status" value="1"/>
</dbReference>
<dbReference type="Pfam" id="PF17417">
    <property type="entry name" value="Glycoprot_B_PH2"/>
    <property type="match status" value="1"/>
</dbReference>
<dbReference type="Pfam" id="PF00606">
    <property type="entry name" value="Glycoprotein_B"/>
    <property type="match status" value="1"/>
</dbReference>
<dbReference type="SUPFAM" id="SSF161008">
    <property type="entry name" value="Viral glycoprotein ectodomain-like"/>
    <property type="match status" value="1"/>
</dbReference>
<sequence>MSKMRVLFLAVFLMNSVLMIYCDSDDYIRAGYNHKYPFRICSIAKGTDLMRFDRDISCSPYKSNAKMSEGFFIIYKTNIETYTFPVRTYKNELTFPTSYRDVGVVYFLDRTVMGLAMPVYEANLVNSRAQCYSAVAIKRPDGTVFSAYHEDNNKNETLELFPLNFKSVTNKRFITTKEPYFARGPLWLYSTSTSLNCIVTEATAKAKYPFSYFALTTGEIVEGSPFFDGSNGKHFAEPLEKLTILENYTMIEDLMNGMNGATTLVRKIAFLEKGDTLFSWEIKEENESVCMLKHWTTVTHGLRAETDETYHFISKELTAAFVASKESLNLTDPKQTCIKNEFEKIITDVYMSDYNDAYSMNGSYQIFKTTGDLILIWQPLVQKSLMVLEQGSVNLRRRRDLVDVKSRHDILYVQLQYLYDTLKDYINDALGNLAESWCLDQKRTITMLHELSKISPSSIVSEVYGRPISAQLHGDVLAISKCIEVNQSSVQLYKSMRVVDAKGVRSETMCYNRPLVTFSFVNSTPEVVLGQLGLDNEILLGDHRTEECEIPSTKIFLSGNHAHVYTDYTHTNSTPIEDIEVLDAFIRLKIDPLENADFKLLDLYSPDELSRANVFDLENILREYNSYKSALYTIEAKIATNTPSYVNGINSFLQGLGAIGTGLGSVISVTAGALGDIVGGVVSFLKNPFGGGLMLILAIVVVVIIIVVFVRQKHVLSKPIDMMFPYATNPVTTVSSVTGTTVVKTPSVKDADGGTSVAVSEKEEGMADVSGQISGDEYSQEDALKMLKAIKSLDESYRRKPSSSESHASKPSLIDRIRYRGYKSVNVEEA</sequence>